<accession>Q98TF5</accession>
<feature type="chain" id="PRO_0000127028" description="Large ribosomal subunit protein eL39">
    <location>
        <begin position="1"/>
        <end position="51"/>
    </location>
</feature>
<dbReference type="EMBL" id="AB046397">
    <property type="protein sequence ID" value="BAB21250.1"/>
    <property type="molecule type" value="mRNA"/>
</dbReference>
<dbReference type="RefSeq" id="NP_989603.1">
    <property type="nucleotide sequence ID" value="NM_204272.1"/>
</dbReference>
<dbReference type="PDB" id="8Q7Z">
    <property type="method" value="EM"/>
    <property type="resolution" value="2.50 A"/>
    <property type="chains" value="Bl=1-51"/>
</dbReference>
<dbReference type="PDB" id="8Q87">
    <property type="method" value="EM"/>
    <property type="resolution" value="2.40 A"/>
    <property type="chains" value="Bl=1-51"/>
</dbReference>
<dbReference type="PDBsum" id="8Q7Z"/>
<dbReference type="PDBsum" id="8Q87"/>
<dbReference type="SMR" id="Q98TF5"/>
<dbReference type="FunCoup" id="Q98TF5">
    <property type="interactions" value="1382"/>
</dbReference>
<dbReference type="STRING" id="9031.ENSGALP00000038282"/>
<dbReference type="PaxDb" id="9031-ENSGALP00000038282"/>
<dbReference type="Ensembl" id="ENSGALT00010031082.1">
    <property type="protein sequence ID" value="ENSGALP00010018076.1"/>
    <property type="gene ID" value="ENSGALG00010012955.1"/>
</dbReference>
<dbReference type="GeneID" id="374132"/>
<dbReference type="KEGG" id="gga:374132"/>
<dbReference type="CTD" id="116832"/>
<dbReference type="VEuPathDB" id="HostDB:geneid_374132"/>
<dbReference type="eggNOG" id="KOG0002">
    <property type="taxonomic scope" value="Eukaryota"/>
</dbReference>
<dbReference type="GeneTree" id="ENSGT00390000014814"/>
<dbReference type="HOGENOM" id="CLU_181948_3_0_1"/>
<dbReference type="InParanoid" id="Q98TF5"/>
<dbReference type="OMA" id="RRTKMNI"/>
<dbReference type="OrthoDB" id="6332053at2759"/>
<dbReference type="PhylomeDB" id="Q98TF5"/>
<dbReference type="TreeFam" id="TF300223"/>
<dbReference type="Reactome" id="R-GGA-1799339">
    <property type="pathway name" value="SRP-dependent cotranslational protein targeting to membrane"/>
</dbReference>
<dbReference type="Reactome" id="R-GGA-72689">
    <property type="pathway name" value="Formation of a pool of free 40S subunits"/>
</dbReference>
<dbReference type="Reactome" id="R-GGA-72706">
    <property type="pathway name" value="GTP hydrolysis and joining of the 60S ribosomal subunit"/>
</dbReference>
<dbReference type="Reactome" id="R-GGA-975956">
    <property type="pathway name" value="Nonsense Mediated Decay (NMD) independent of the Exon Junction Complex (EJC)"/>
</dbReference>
<dbReference type="Reactome" id="R-GGA-975957">
    <property type="pathway name" value="Nonsense Mediated Decay (NMD) enhanced by the Exon Junction Complex (EJC)"/>
</dbReference>
<dbReference type="PRO" id="PR:Q98TF5"/>
<dbReference type="Proteomes" id="UP000000539">
    <property type="component" value="Chromosome 4"/>
</dbReference>
<dbReference type="Bgee" id="ENSGALG00000008620">
    <property type="expression patterns" value="Expressed in spermatid and 13 other cell types or tissues"/>
</dbReference>
<dbReference type="GO" id="GO:0022625">
    <property type="term" value="C:cytosolic large ribosomal subunit"/>
    <property type="evidence" value="ECO:0000318"/>
    <property type="project" value="GO_Central"/>
</dbReference>
<dbReference type="GO" id="GO:0003735">
    <property type="term" value="F:structural constituent of ribosome"/>
    <property type="evidence" value="ECO:0007669"/>
    <property type="project" value="InterPro"/>
</dbReference>
<dbReference type="GO" id="GO:0006412">
    <property type="term" value="P:translation"/>
    <property type="evidence" value="ECO:0007669"/>
    <property type="project" value="InterPro"/>
</dbReference>
<dbReference type="FunFam" id="1.10.1620.10:FF:000001">
    <property type="entry name" value="60S ribosomal protein-like L39"/>
    <property type="match status" value="1"/>
</dbReference>
<dbReference type="Gene3D" id="1.10.1620.10">
    <property type="entry name" value="Ribosomal protein L39e"/>
    <property type="match status" value="1"/>
</dbReference>
<dbReference type="HAMAP" id="MF_00629">
    <property type="entry name" value="Ribosomal_eL39"/>
    <property type="match status" value="1"/>
</dbReference>
<dbReference type="InterPro" id="IPR000077">
    <property type="entry name" value="Ribosomal_eL39"/>
</dbReference>
<dbReference type="InterPro" id="IPR020083">
    <property type="entry name" value="Ribosomal_eL39_CS"/>
</dbReference>
<dbReference type="InterPro" id="IPR023626">
    <property type="entry name" value="Ribosomal_eL39_dom_sf"/>
</dbReference>
<dbReference type="PANTHER" id="PTHR19970:SF0">
    <property type="entry name" value="LARGE RIBOSOMAL SUBUNIT PROTEIN EL39"/>
    <property type="match status" value="1"/>
</dbReference>
<dbReference type="PANTHER" id="PTHR19970">
    <property type="entry name" value="RIBOSOMAL PROTEIN L39E"/>
    <property type="match status" value="1"/>
</dbReference>
<dbReference type="Pfam" id="PF00832">
    <property type="entry name" value="Ribosomal_L39"/>
    <property type="match status" value="1"/>
</dbReference>
<dbReference type="SUPFAM" id="SSF48662">
    <property type="entry name" value="Ribosomal protein L39e"/>
    <property type="match status" value="1"/>
</dbReference>
<dbReference type="PROSITE" id="PS00051">
    <property type="entry name" value="RIBOSOMAL_L39E"/>
    <property type="match status" value="1"/>
</dbReference>
<keyword id="KW-0002">3D-structure</keyword>
<keyword id="KW-1185">Reference proteome</keyword>
<keyword id="KW-0687">Ribonucleoprotein</keyword>
<keyword id="KW-0689">Ribosomal protein</keyword>
<organism>
    <name type="scientific">Gallus gallus</name>
    <name type="common">Chicken</name>
    <dbReference type="NCBI Taxonomy" id="9031"/>
    <lineage>
        <taxon>Eukaryota</taxon>
        <taxon>Metazoa</taxon>
        <taxon>Chordata</taxon>
        <taxon>Craniata</taxon>
        <taxon>Vertebrata</taxon>
        <taxon>Euteleostomi</taxon>
        <taxon>Archelosauria</taxon>
        <taxon>Archosauria</taxon>
        <taxon>Dinosauria</taxon>
        <taxon>Saurischia</taxon>
        <taxon>Theropoda</taxon>
        <taxon>Coelurosauria</taxon>
        <taxon>Aves</taxon>
        <taxon>Neognathae</taxon>
        <taxon>Galloanserae</taxon>
        <taxon>Galliformes</taxon>
        <taxon>Phasianidae</taxon>
        <taxon>Phasianinae</taxon>
        <taxon>Gallus</taxon>
    </lineage>
</organism>
<sequence length="51" mass="6379">MSSHKTFKIKRFLAKKQKQNRPIPQWIRMKTGNKIRYNSKRRHWRRTKLGL</sequence>
<evidence type="ECO:0000250" key="1">
    <source>
        <dbReference type="UniProtKB" id="P62892"/>
    </source>
</evidence>
<evidence type="ECO:0000305" key="2"/>
<comment type="subunit">
    <text evidence="1">Interacts with IMPACT.</text>
</comment>
<comment type="similarity">
    <text evidence="2">Belongs to the eukaryotic ribosomal protein eL39 family.</text>
</comment>
<proteinExistence type="evidence at protein level"/>
<protein>
    <recommendedName>
        <fullName evidence="2">Large ribosomal subunit protein eL39</fullName>
    </recommendedName>
    <alternativeName>
        <fullName>60S ribosomal protein L39</fullName>
    </alternativeName>
</protein>
<gene>
    <name type="primary">RPL39</name>
</gene>
<name>RL39_CHICK</name>
<reference key="1">
    <citation type="journal article" date="2001" name="Genomics">
        <title>A complete map of the human ribosomal protein genes: assignment of 80 genes to the cytogenetic map and implications for human disorders.</title>
        <authorList>
            <person name="Uechi T."/>
            <person name="Tanaka T."/>
            <person name="Kenmochi N."/>
        </authorList>
    </citation>
    <scope>NUCLEOTIDE SEQUENCE [MRNA]</scope>
    <source>
        <tissue>Liver</tissue>
    </source>
</reference>